<name>SPRC_PIG</name>
<accession>P20112</accession>
<accession>Q4Z8Q2</accession>
<evidence type="ECO:0000250" key="1"/>
<evidence type="ECO:0000255" key="2">
    <source>
        <dbReference type="PROSITE-ProRule" id="PRU00798"/>
    </source>
</evidence>
<evidence type="ECO:0000255" key="3">
    <source>
        <dbReference type="PROSITE-ProRule" id="PRU10142"/>
    </source>
</evidence>
<evidence type="ECO:0000269" key="4">
    <source>
    </source>
</evidence>
<evidence type="ECO:0000269" key="5">
    <source>
    </source>
</evidence>
<evidence type="ECO:0000305" key="6"/>
<gene>
    <name type="primary">SPARC</name>
</gene>
<sequence>MRAWIFFLLCLAGKALAAPQQEALPDETEVVEETVAEVPVGANPVQVEVGEFDDGAEEAEEEVVAENPCQNHHCKHGKVCELDENNSPMCVCQDPTSCPAPIGEFEKVCSNDNKTFDSSCHFFATKCTLEGTKKGHKLHLDYIGPCKYIPPCLDSELTEFPLRMRDWLKNVLVTLYERDENNNLLTEKQKLRVKKIHENEKRLEAGDHPVELLARDFEKNYNMYIFPVHWQFGQLDQHPIDGYLSHTELAPLRAPLIPMEHCTTRFFQTCDLDNDKYIALDEWAGCFGIKEQDIDKDLVI</sequence>
<comment type="function">
    <text evidence="1">Appears to regulate cell growth through interactions with the extracellular matrix and cytokines. Binds calcium and copper, several types of collagen, albumin, thrombospondin, PDGF and cell membranes. There are two calcium binding sites; an acidic domain that binds 5 to 8 Ca(2+) with a low affinity and an EF-hand loop that binds a Ca(2+) ion with a high affinity (By similarity).</text>
</comment>
<comment type="subcellular location">
    <subcellularLocation>
        <location>Secreted</location>
        <location>Extracellular space</location>
        <location>Extracellular matrix</location>
        <location>Basement membrane</location>
    </subcellularLocation>
    <text evidence="1">In or around the basement membrane.</text>
</comment>
<comment type="similarity">
    <text evidence="6">Belongs to the SPARC family.</text>
</comment>
<protein>
    <recommendedName>
        <fullName>SPARC</fullName>
    </recommendedName>
    <alternativeName>
        <fullName>Basement-membrane protein 40</fullName>
        <shortName>BM-40</shortName>
    </alternativeName>
    <alternativeName>
        <fullName>Osteonectin</fullName>
        <shortName>ON</shortName>
    </alternativeName>
    <alternativeName>
        <fullName>Secreted protein acidic and rich in cysteine</fullName>
    </alternativeName>
</protein>
<reference key="1">
    <citation type="journal article" date="2006" name="Eur. J. Oral Sci.">
        <title>Porcine SPARC: isolation from dentin, cDNA sequence, and computer model.</title>
        <authorList>
            <person name="Chun Y.-H.P."/>
            <person name="Yamakoshi Y."/>
            <person name="Kim J.-W."/>
            <person name="Iwata T."/>
            <person name="Hu J.C.-C."/>
            <person name="Simmer J.P."/>
        </authorList>
    </citation>
    <scope>NUCLEOTIDE SEQUENCE [MRNA]</scope>
    <scope>PROTEIN SEQUENCE OF 18-30 AND 216-228</scope>
    <source>
        <tissue>Enamel epithelium</tissue>
    </source>
</reference>
<reference key="2">
    <citation type="journal article" date="1988" name="Biochem. J.">
        <title>Characterization of porcine osteonectin extracted from foetal calvariae.</title>
        <authorList>
            <person name="Domenicucci C."/>
            <person name="Goldberg H.A."/>
            <person name="Hofmann T."/>
            <person name="Isenman D."/>
            <person name="Wasi S."/>
            <person name="Sodek J."/>
        </authorList>
    </citation>
    <scope>PROTEIN SEQUENCE OF 18-52</scope>
    <scope>CHARACTERIZATION</scope>
</reference>
<dbReference type="EMBL" id="AY963262">
    <property type="protein sequence ID" value="AAX83050.1"/>
    <property type="molecule type" value="mRNA"/>
</dbReference>
<dbReference type="PIR" id="S00998">
    <property type="entry name" value="S00998"/>
</dbReference>
<dbReference type="RefSeq" id="NP_001026964.1">
    <property type="nucleotide sequence ID" value="NM_001031794.1"/>
</dbReference>
<dbReference type="SMR" id="P20112"/>
<dbReference type="FunCoup" id="P20112">
    <property type="interactions" value="120"/>
</dbReference>
<dbReference type="STRING" id="9823.ENSSSCP00000072749"/>
<dbReference type="GlyCosmos" id="P20112">
    <property type="glycosylation" value="1 site, No reported glycans"/>
</dbReference>
<dbReference type="GlyGen" id="P20112">
    <property type="glycosylation" value="1 site"/>
</dbReference>
<dbReference type="PaxDb" id="9823-ENSSSCP00000018098"/>
<dbReference type="PeptideAtlas" id="P20112"/>
<dbReference type="Ensembl" id="ENSSSCT00015032407.1">
    <property type="protein sequence ID" value="ENSSSCP00015012870.1"/>
    <property type="gene ID" value="ENSSSCG00015024195.1"/>
</dbReference>
<dbReference type="Ensembl" id="ENSSSCT00025051623.1">
    <property type="protein sequence ID" value="ENSSSCP00025022032.1"/>
    <property type="gene ID" value="ENSSSCG00025037875.1"/>
</dbReference>
<dbReference type="Ensembl" id="ENSSSCT00030010505.1">
    <property type="protein sequence ID" value="ENSSSCP00030004544.1"/>
    <property type="gene ID" value="ENSSSCG00030007808.1"/>
</dbReference>
<dbReference type="Ensembl" id="ENSSSCT00035066175.1">
    <property type="protein sequence ID" value="ENSSSCP00035026843.1"/>
    <property type="gene ID" value="ENSSSCG00035049628.1"/>
</dbReference>
<dbReference type="Ensembl" id="ENSSSCT00040105033.1">
    <property type="protein sequence ID" value="ENSSSCP00040047984.1"/>
    <property type="gene ID" value="ENSSSCG00040075656.1"/>
</dbReference>
<dbReference type="Ensembl" id="ENSSSCT00045006510.1">
    <property type="protein sequence ID" value="ENSSSCP00045004433.1"/>
    <property type="gene ID" value="ENSSSCG00045003926.1"/>
</dbReference>
<dbReference type="Ensembl" id="ENSSSCT00050077449.1">
    <property type="protein sequence ID" value="ENSSSCP00050033326.1"/>
    <property type="gene ID" value="ENSSSCG00050056796.1"/>
</dbReference>
<dbReference type="Ensembl" id="ENSSSCT00060084460.1">
    <property type="protein sequence ID" value="ENSSSCP00060036582.1"/>
    <property type="gene ID" value="ENSSSCG00060061892.1"/>
</dbReference>
<dbReference type="Ensembl" id="ENSSSCT00065046549.1">
    <property type="protein sequence ID" value="ENSSSCP00065019995.1"/>
    <property type="gene ID" value="ENSSSCG00065034205.1"/>
</dbReference>
<dbReference type="Ensembl" id="ENSSSCT00085004233">
    <property type="protein sequence ID" value="ENSSSCP00085003168"/>
    <property type="gene ID" value="ENSSSCG00085002399"/>
</dbReference>
<dbReference type="Ensembl" id="ENSSSCT00090010074">
    <property type="protein sequence ID" value="ENSSSCP00090006163"/>
    <property type="gene ID" value="ENSSSCG00090005738"/>
</dbReference>
<dbReference type="Ensembl" id="ENSSSCT00105038238">
    <property type="protein sequence ID" value="ENSSSCP00105026573"/>
    <property type="gene ID" value="ENSSSCG00105019986"/>
</dbReference>
<dbReference type="Ensembl" id="ENSSSCT00115015427">
    <property type="protein sequence ID" value="ENSSSCP00115014564"/>
    <property type="gene ID" value="ENSSSCG00115008828"/>
</dbReference>
<dbReference type="Ensembl" id="ENSSSCT00130008081">
    <property type="protein sequence ID" value="ENSSSCP00130005475"/>
    <property type="gene ID" value="ENSSSCG00130004320"/>
</dbReference>
<dbReference type="GeneID" id="595124"/>
<dbReference type="KEGG" id="ssc:595124"/>
<dbReference type="CTD" id="6678"/>
<dbReference type="eggNOG" id="KOG4004">
    <property type="taxonomic scope" value="Eukaryota"/>
</dbReference>
<dbReference type="InParanoid" id="P20112"/>
<dbReference type="OrthoDB" id="9972865at2759"/>
<dbReference type="Reactome" id="R-SSC-114608">
    <property type="pathway name" value="Platelet degranulation"/>
</dbReference>
<dbReference type="Reactome" id="R-SSC-3000178">
    <property type="pathway name" value="ECM proteoglycans"/>
</dbReference>
<dbReference type="Reactome" id="R-SSC-3000497">
    <property type="pathway name" value="Scavenging by Class H Receptors"/>
</dbReference>
<dbReference type="Proteomes" id="UP000008227">
    <property type="component" value="Unplaced"/>
</dbReference>
<dbReference type="Proteomes" id="UP000314985">
    <property type="component" value="Unplaced"/>
</dbReference>
<dbReference type="Proteomes" id="UP000694570">
    <property type="component" value="Unplaced"/>
</dbReference>
<dbReference type="Proteomes" id="UP000694571">
    <property type="component" value="Unplaced"/>
</dbReference>
<dbReference type="Proteomes" id="UP000694720">
    <property type="component" value="Unplaced"/>
</dbReference>
<dbReference type="Proteomes" id="UP000694722">
    <property type="component" value="Unplaced"/>
</dbReference>
<dbReference type="Proteomes" id="UP000694723">
    <property type="component" value="Unplaced"/>
</dbReference>
<dbReference type="Proteomes" id="UP000694724">
    <property type="component" value="Unplaced"/>
</dbReference>
<dbReference type="Proteomes" id="UP000694725">
    <property type="component" value="Unplaced"/>
</dbReference>
<dbReference type="Proteomes" id="UP000694726">
    <property type="component" value="Unplaced"/>
</dbReference>
<dbReference type="Proteomes" id="UP000694727">
    <property type="component" value="Unplaced"/>
</dbReference>
<dbReference type="Proteomes" id="UP000694728">
    <property type="component" value="Unplaced"/>
</dbReference>
<dbReference type="GO" id="GO:0005604">
    <property type="term" value="C:basement membrane"/>
    <property type="evidence" value="ECO:0007669"/>
    <property type="project" value="UniProtKB-SubCell"/>
</dbReference>
<dbReference type="GO" id="GO:0005615">
    <property type="term" value="C:extracellular space"/>
    <property type="evidence" value="ECO:0000318"/>
    <property type="project" value="GO_Central"/>
</dbReference>
<dbReference type="GO" id="GO:0005509">
    <property type="term" value="F:calcium ion binding"/>
    <property type="evidence" value="ECO:0000318"/>
    <property type="project" value="GO_Central"/>
</dbReference>
<dbReference type="GO" id="GO:0005518">
    <property type="term" value="F:collagen binding"/>
    <property type="evidence" value="ECO:0000318"/>
    <property type="project" value="GO_Central"/>
</dbReference>
<dbReference type="GO" id="GO:0050840">
    <property type="term" value="F:extracellular matrix binding"/>
    <property type="evidence" value="ECO:0000318"/>
    <property type="project" value="GO_Central"/>
</dbReference>
<dbReference type="GO" id="GO:0050807">
    <property type="term" value="P:regulation of synapse organization"/>
    <property type="evidence" value="ECO:0000318"/>
    <property type="project" value="GO_Central"/>
</dbReference>
<dbReference type="GO" id="GO:0048752">
    <property type="term" value="P:semicircular canal morphogenesis"/>
    <property type="evidence" value="ECO:0000318"/>
    <property type="project" value="GO_Central"/>
</dbReference>
<dbReference type="CDD" id="cd16231">
    <property type="entry name" value="EFh_SPARC_like"/>
    <property type="match status" value="1"/>
</dbReference>
<dbReference type="CDD" id="cd01328">
    <property type="entry name" value="FSL_SPARC"/>
    <property type="match status" value="1"/>
</dbReference>
<dbReference type="FunFam" id="1.10.238.10:FF:000068">
    <property type="entry name" value="SPARC isoform 1"/>
    <property type="match status" value="1"/>
</dbReference>
<dbReference type="FunFam" id="3.30.60.30:FF:000004">
    <property type="entry name" value="SPARC isoform 1"/>
    <property type="match status" value="1"/>
</dbReference>
<dbReference type="Gene3D" id="3.30.60.30">
    <property type="match status" value="1"/>
</dbReference>
<dbReference type="Gene3D" id="1.10.238.10">
    <property type="entry name" value="EF-hand"/>
    <property type="match status" value="1"/>
</dbReference>
<dbReference type="InterPro" id="IPR011992">
    <property type="entry name" value="EF-hand-dom_pair"/>
</dbReference>
<dbReference type="InterPro" id="IPR018247">
    <property type="entry name" value="EF_Hand_1_Ca_BS"/>
</dbReference>
<dbReference type="InterPro" id="IPR003645">
    <property type="entry name" value="Fol_N"/>
</dbReference>
<dbReference type="InterPro" id="IPR015369">
    <property type="entry name" value="Follistatin/Osteonectin_EGF"/>
</dbReference>
<dbReference type="InterPro" id="IPR002350">
    <property type="entry name" value="Kazal_dom"/>
</dbReference>
<dbReference type="InterPro" id="IPR036058">
    <property type="entry name" value="Kazal_dom_sf"/>
</dbReference>
<dbReference type="InterPro" id="IPR001999">
    <property type="entry name" value="Osteonectin_CS"/>
</dbReference>
<dbReference type="InterPro" id="IPR019577">
    <property type="entry name" value="SPARC/Testican_Ca-bd-dom"/>
</dbReference>
<dbReference type="InterPro" id="IPR037641">
    <property type="entry name" value="SPARC_FS"/>
</dbReference>
<dbReference type="PANTHER" id="PTHR13866:SF6">
    <property type="entry name" value="SPARC"/>
    <property type="match status" value="1"/>
</dbReference>
<dbReference type="PANTHER" id="PTHR13866">
    <property type="entry name" value="SPARC OSTEONECTIN"/>
    <property type="match status" value="1"/>
</dbReference>
<dbReference type="Pfam" id="PF09289">
    <property type="entry name" value="FOLN"/>
    <property type="match status" value="1"/>
</dbReference>
<dbReference type="Pfam" id="PF00050">
    <property type="entry name" value="Kazal_1"/>
    <property type="match status" value="1"/>
</dbReference>
<dbReference type="Pfam" id="PF10591">
    <property type="entry name" value="SPARC_Ca_bdg"/>
    <property type="match status" value="1"/>
</dbReference>
<dbReference type="SMART" id="SM00274">
    <property type="entry name" value="FOLN"/>
    <property type="match status" value="1"/>
</dbReference>
<dbReference type="SMART" id="SM00280">
    <property type="entry name" value="KAZAL"/>
    <property type="match status" value="1"/>
</dbReference>
<dbReference type="SUPFAM" id="SSF47473">
    <property type="entry name" value="EF-hand"/>
    <property type="match status" value="1"/>
</dbReference>
<dbReference type="SUPFAM" id="SSF57196">
    <property type="entry name" value="EGF/Laminin"/>
    <property type="match status" value="1"/>
</dbReference>
<dbReference type="SUPFAM" id="SSF100895">
    <property type="entry name" value="Kazal-type serine protease inhibitors"/>
    <property type="match status" value="1"/>
</dbReference>
<dbReference type="PROSITE" id="PS00018">
    <property type="entry name" value="EF_HAND_1"/>
    <property type="match status" value="1"/>
</dbReference>
<dbReference type="PROSITE" id="PS51465">
    <property type="entry name" value="KAZAL_2"/>
    <property type="match status" value="1"/>
</dbReference>
<dbReference type="PROSITE" id="PS00612">
    <property type="entry name" value="OSTEONECTIN_1"/>
    <property type="match status" value="1"/>
</dbReference>
<dbReference type="PROSITE" id="PS00613">
    <property type="entry name" value="OSTEONECTIN_2"/>
    <property type="match status" value="1"/>
</dbReference>
<feature type="signal peptide" evidence="4 5">
    <location>
        <begin position="1"/>
        <end position="17"/>
    </location>
</feature>
<feature type="chain" id="PRO_0000160590" description="SPARC">
    <location>
        <begin position="18"/>
        <end position="300"/>
    </location>
</feature>
<feature type="domain" description="Follistatin-like">
    <location>
        <begin position="68"/>
        <end position="90"/>
    </location>
</feature>
<feature type="domain" description="Kazal-like" evidence="2">
    <location>
        <begin position="86"/>
        <end position="148"/>
    </location>
</feature>
<feature type="domain" description="EF-hand">
    <location>
        <begin position="258"/>
        <end position="293"/>
    </location>
</feature>
<feature type="binding site" evidence="3">
    <location>
        <position position="271"/>
    </location>
    <ligand>
        <name>Ca(2+)</name>
        <dbReference type="ChEBI" id="CHEBI:29108"/>
    </ligand>
</feature>
<feature type="binding site" evidence="3">
    <location>
        <position position="273"/>
    </location>
    <ligand>
        <name>Ca(2+)</name>
        <dbReference type="ChEBI" id="CHEBI:29108"/>
    </ligand>
</feature>
<feature type="binding site" evidence="3">
    <location>
        <position position="275"/>
    </location>
    <ligand>
        <name>Ca(2+)</name>
        <dbReference type="ChEBI" id="CHEBI:29108"/>
    </ligand>
</feature>
<feature type="binding site" evidence="3">
    <location>
        <position position="277"/>
    </location>
    <ligand>
        <name>Ca(2+)</name>
        <dbReference type="ChEBI" id="CHEBI:29108"/>
    </ligand>
</feature>
<feature type="binding site" evidence="3">
    <location>
        <position position="282"/>
    </location>
    <ligand>
        <name>Ca(2+)</name>
        <dbReference type="ChEBI" id="CHEBI:29108"/>
    </ligand>
</feature>
<feature type="glycosylation site" description="N-linked (GlcNAc...) asparagine" evidence="6">
    <location>
        <position position="113"/>
    </location>
</feature>
<feature type="disulfide bond" evidence="2">
    <location>
        <begin position="69"/>
        <end position="80"/>
    </location>
</feature>
<feature type="disulfide bond" evidence="2">
    <location>
        <begin position="74"/>
        <end position="90"/>
    </location>
</feature>
<feature type="disulfide bond" evidence="2">
    <location>
        <begin position="92"/>
        <end position="127"/>
    </location>
</feature>
<feature type="disulfide bond" evidence="2">
    <location>
        <begin position="98"/>
        <end position="120"/>
    </location>
</feature>
<feature type="disulfide bond" evidence="2">
    <location>
        <begin position="109"/>
        <end position="146"/>
    </location>
</feature>
<feature type="disulfide bond" evidence="2">
    <location>
        <begin position="152"/>
        <end position="262"/>
    </location>
</feature>
<feature type="disulfide bond" evidence="2">
    <location>
        <begin position="270"/>
        <end position="286"/>
    </location>
</feature>
<keyword id="KW-0084">Basement membrane</keyword>
<keyword id="KW-0106">Calcium</keyword>
<keyword id="KW-0186">Copper</keyword>
<keyword id="KW-0903">Direct protein sequencing</keyword>
<keyword id="KW-1015">Disulfide bond</keyword>
<keyword id="KW-0272">Extracellular matrix</keyword>
<keyword id="KW-0325">Glycoprotein</keyword>
<keyword id="KW-0479">Metal-binding</keyword>
<keyword id="KW-1185">Reference proteome</keyword>
<keyword id="KW-0964">Secreted</keyword>
<keyword id="KW-0732">Signal</keyword>
<proteinExistence type="evidence at protein level"/>
<organism>
    <name type="scientific">Sus scrofa</name>
    <name type="common">Pig</name>
    <dbReference type="NCBI Taxonomy" id="9823"/>
    <lineage>
        <taxon>Eukaryota</taxon>
        <taxon>Metazoa</taxon>
        <taxon>Chordata</taxon>
        <taxon>Craniata</taxon>
        <taxon>Vertebrata</taxon>
        <taxon>Euteleostomi</taxon>
        <taxon>Mammalia</taxon>
        <taxon>Eutheria</taxon>
        <taxon>Laurasiatheria</taxon>
        <taxon>Artiodactyla</taxon>
        <taxon>Suina</taxon>
        <taxon>Suidae</taxon>
        <taxon>Sus</taxon>
    </lineage>
</organism>